<accession>A8YWL7</accession>
<keyword id="KW-1003">Cell membrane</keyword>
<keyword id="KW-0378">Hydrolase</keyword>
<keyword id="KW-0472">Membrane</keyword>
<keyword id="KW-0479">Metal-binding</keyword>
<keyword id="KW-0482">Metalloprotease</keyword>
<keyword id="KW-0645">Protease</keyword>
<keyword id="KW-0812">Transmembrane</keyword>
<keyword id="KW-1133">Transmembrane helix</keyword>
<keyword id="KW-0862">Zinc</keyword>
<proteinExistence type="inferred from homology"/>
<name>HTPX_LACH4</name>
<comment type="cofactor">
    <cofactor evidence="1">
        <name>Zn(2+)</name>
        <dbReference type="ChEBI" id="CHEBI:29105"/>
    </cofactor>
    <text evidence="1">Binds 1 zinc ion per subunit.</text>
</comment>
<comment type="subcellular location">
    <subcellularLocation>
        <location evidence="1">Cell membrane</location>
        <topology evidence="1">Multi-pass membrane protein</topology>
    </subcellularLocation>
</comment>
<comment type="similarity">
    <text evidence="1">Belongs to the peptidase M48B family.</text>
</comment>
<dbReference type="EC" id="3.4.24.-" evidence="1"/>
<dbReference type="EMBL" id="CP000517">
    <property type="protein sequence ID" value="ABX26379.1"/>
    <property type="molecule type" value="Genomic_DNA"/>
</dbReference>
<dbReference type="RefSeq" id="WP_012211256.1">
    <property type="nucleotide sequence ID" value="NC_010080.1"/>
</dbReference>
<dbReference type="KEGG" id="lhe:lhv_0108"/>
<dbReference type="eggNOG" id="COG0501">
    <property type="taxonomic scope" value="Bacteria"/>
</dbReference>
<dbReference type="HOGENOM" id="CLU_042266_2_1_9"/>
<dbReference type="Proteomes" id="UP000000790">
    <property type="component" value="Chromosome"/>
</dbReference>
<dbReference type="GO" id="GO:0005886">
    <property type="term" value="C:plasma membrane"/>
    <property type="evidence" value="ECO:0007669"/>
    <property type="project" value="UniProtKB-SubCell"/>
</dbReference>
<dbReference type="GO" id="GO:0004222">
    <property type="term" value="F:metalloendopeptidase activity"/>
    <property type="evidence" value="ECO:0007669"/>
    <property type="project" value="UniProtKB-UniRule"/>
</dbReference>
<dbReference type="GO" id="GO:0008270">
    <property type="term" value="F:zinc ion binding"/>
    <property type="evidence" value="ECO:0007669"/>
    <property type="project" value="UniProtKB-UniRule"/>
</dbReference>
<dbReference type="GO" id="GO:0006508">
    <property type="term" value="P:proteolysis"/>
    <property type="evidence" value="ECO:0007669"/>
    <property type="project" value="UniProtKB-KW"/>
</dbReference>
<dbReference type="CDD" id="cd07340">
    <property type="entry name" value="M48B_Htpx_like"/>
    <property type="match status" value="1"/>
</dbReference>
<dbReference type="Gene3D" id="3.30.2010.10">
    <property type="entry name" value="Metalloproteases ('zincins'), catalytic domain"/>
    <property type="match status" value="1"/>
</dbReference>
<dbReference type="HAMAP" id="MF_00188">
    <property type="entry name" value="Pept_M48_protease_HtpX"/>
    <property type="match status" value="1"/>
</dbReference>
<dbReference type="InterPro" id="IPR050083">
    <property type="entry name" value="HtpX_protease"/>
</dbReference>
<dbReference type="InterPro" id="IPR022919">
    <property type="entry name" value="Pept_M48_protease_HtpX"/>
</dbReference>
<dbReference type="InterPro" id="IPR001915">
    <property type="entry name" value="Peptidase_M48"/>
</dbReference>
<dbReference type="NCBIfam" id="NF003425">
    <property type="entry name" value="PRK04897.1"/>
    <property type="match status" value="1"/>
</dbReference>
<dbReference type="PANTHER" id="PTHR43221">
    <property type="entry name" value="PROTEASE HTPX"/>
    <property type="match status" value="1"/>
</dbReference>
<dbReference type="PANTHER" id="PTHR43221:SF1">
    <property type="entry name" value="PROTEASE HTPX"/>
    <property type="match status" value="1"/>
</dbReference>
<dbReference type="Pfam" id="PF01435">
    <property type="entry name" value="Peptidase_M48"/>
    <property type="match status" value="1"/>
</dbReference>
<gene>
    <name evidence="1" type="primary">htpX</name>
    <name type="ordered locus">lhv_0108</name>
</gene>
<evidence type="ECO:0000255" key="1">
    <source>
        <dbReference type="HAMAP-Rule" id="MF_00188"/>
    </source>
</evidence>
<reference key="1">
    <citation type="journal article" date="2008" name="J. Bacteriol.">
        <title>Genome sequence of Lactobacillus helveticus: an organism distinguished by selective gene loss and IS element expansion.</title>
        <authorList>
            <person name="Callanan M."/>
            <person name="Kaleta P."/>
            <person name="O'Callaghan J."/>
            <person name="O'Sullivan O."/>
            <person name="Jordan K."/>
            <person name="McAuliffe O."/>
            <person name="Sangrador-Vegas A."/>
            <person name="Slattery L."/>
            <person name="Fitzgerald G.F."/>
            <person name="Beresford T."/>
            <person name="Ross R.P."/>
        </authorList>
    </citation>
    <scope>NUCLEOTIDE SEQUENCE [LARGE SCALE GENOMIC DNA]</scope>
    <source>
        <strain>DPC 4571</strain>
    </source>
</reference>
<sequence>MLYQQIARNKRKTALIMVLFVVILTLVGAGLGYLFSNRPWMGIIIALAGSLIYLLIMWQNPANMIMSLNHAQEIQEADNPELWHIVEDMAMVARVPMPRVYIIPDPSPNAFATGRDPNHSAVAVTEGILQLMNREELEGVLGHELSHVRNYDILLSTIAVVLVGVISFISGMASRYIWFAGGSRDSDDDRDSNAFEMIFKVVAIVFVLILGPLSASLAQMALSRNREYLADASSVELTRNPQGLISALRKIENSQPMKQADRSSAGLYIENPFHNHGLSHLFDTHPPTEDRIKRLEQM</sequence>
<organism>
    <name type="scientific">Lactobacillus helveticus (strain DPC 4571)</name>
    <dbReference type="NCBI Taxonomy" id="405566"/>
    <lineage>
        <taxon>Bacteria</taxon>
        <taxon>Bacillati</taxon>
        <taxon>Bacillota</taxon>
        <taxon>Bacilli</taxon>
        <taxon>Lactobacillales</taxon>
        <taxon>Lactobacillaceae</taxon>
        <taxon>Lactobacillus</taxon>
    </lineage>
</organism>
<feature type="chain" id="PRO_1000071690" description="Protease HtpX homolog">
    <location>
        <begin position="1"/>
        <end position="298"/>
    </location>
</feature>
<feature type="transmembrane region" description="Helical" evidence="1">
    <location>
        <begin position="15"/>
        <end position="35"/>
    </location>
</feature>
<feature type="transmembrane region" description="Helical" evidence="1">
    <location>
        <begin position="39"/>
        <end position="59"/>
    </location>
</feature>
<feature type="transmembrane region" description="Helical" evidence="1">
    <location>
        <begin position="153"/>
        <end position="173"/>
    </location>
</feature>
<feature type="transmembrane region" description="Helical" evidence="1">
    <location>
        <begin position="197"/>
        <end position="217"/>
    </location>
</feature>
<feature type="active site" evidence="1">
    <location>
        <position position="144"/>
    </location>
</feature>
<feature type="binding site" evidence="1">
    <location>
        <position position="143"/>
    </location>
    <ligand>
        <name>Zn(2+)</name>
        <dbReference type="ChEBI" id="CHEBI:29105"/>
        <note>catalytic</note>
    </ligand>
</feature>
<feature type="binding site" evidence="1">
    <location>
        <position position="147"/>
    </location>
    <ligand>
        <name>Zn(2+)</name>
        <dbReference type="ChEBI" id="CHEBI:29105"/>
        <note>catalytic</note>
    </ligand>
</feature>
<feature type="binding site" evidence="1">
    <location>
        <position position="227"/>
    </location>
    <ligand>
        <name>Zn(2+)</name>
        <dbReference type="ChEBI" id="CHEBI:29105"/>
        <note>catalytic</note>
    </ligand>
</feature>
<protein>
    <recommendedName>
        <fullName evidence="1">Protease HtpX homolog</fullName>
        <ecNumber evidence="1">3.4.24.-</ecNumber>
    </recommendedName>
</protein>